<accession>B8ZKQ8</accession>
<proteinExistence type="inferred from homology"/>
<gene>
    <name type="ordered locus">SPN23F02270</name>
</gene>
<evidence type="ECO:0000255" key="1">
    <source>
        <dbReference type="HAMAP-Rule" id="MF_01221"/>
    </source>
</evidence>
<feature type="chain" id="PRO_1000164869" description="UPF0210 protein SPN23F02270">
    <location>
        <begin position="1"/>
        <end position="445"/>
    </location>
</feature>
<dbReference type="EMBL" id="FM211187">
    <property type="protein sequence ID" value="CAR68087.1"/>
    <property type="molecule type" value="Genomic_DNA"/>
</dbReference>
<dbReference type="RefSeq" id="WP_000354918.1">
    <property type="nucleotide sequence ID" value="NC_011900.1"/>
</dbReference>
<dbReference type="SMR" id="B8ZKQ8"/>
<dbReference type="KEGG" id="sne:SPN23F02270"/>
<dbReference type="HOGENOM" id="CLU_048704_0_0_9"/>
<dbReference type="CDD" id="cd08025">
    <property type="entry name" value="RNR_PFL_like_DUF711"/>
    <property type="match status" value="1"/>
</dbReference>
<dbReference type="Gene3D" id="3.20.70.20">
    <property type="match status" value="1"/>
</dbReference>
<dbReference type="HAMAP" id="MF_01221">
    <property type="entry name" value="UPF0210"/>
    <property type="match status" value="1"/>
</dbReference>
<dbReference type="InterPro" id="IPR007841">
    <property type="entry name" value="UPF0210"/>
</dbReference>
<dbReference type="NCBIfam" id="NF003700">
    <property type="entry name" value="PRK05313.1"/>
    <property type="match status" value="1"/>
</dbReference>
<dbReference type="PANTHER" id="PTHR37560:SF1">
    <property type="entry name" value="UPF0210 PROTEIN MJ1665"/>
    <property type="match status" value="1"/>
</dbReference>
<dbReference type="PANTHER" id="PTHR37560">
    <property type="entry name" value="UPF0210 PROTEIN SPR0218"/>
    <property type="match status" value="1"/>
</dbReference>
<dbReference type="Pfam" id="PF05167">
    <property type="entry name" value="DUF711"/>
    <property type="match status" value="1"/>
</dbReference>
<dbReference type="SUPFAM" id="SSF51998">
    <property type="entry name" value="PFL-like glycyl radical enzymes"/>
    <property type="match status" value="1"/>
</dbReference>
<protein>
    <recommendedName>
        <fullName evidence="1">UPF0210 protein SPN23F02270</fullName>
    </recommendedName>
</protein>
<sequence>MDIRQVTETIAMIEEQNFDIRTITMGISLLDCIDPNINRAAEKIYQKITTKAANLVAVGDEIAAELGIPIVNKRVSVTPISLIGAATDATDYVVLAKALDKAAKEIGVDFIGGFSALVQKGYQKGDEILINSIPRALAETDKVCSSVNIGSTKSGINMTAVADMGRIIKETANLSDMGVAKLVVFANAVEDNPFMAGAFHGVGEADVIINVGVSGPGVVKRALEKVRGQSFDVVAETVKKTAFKITRIGQLVGQMASERLGVEFGIVDLSLAPTPAVGDSVARVLEEMGLETVGTHGTTAALALLNDQVKKGGVMACNQVGGLSGAFIPVSEDEGMIAAVQNGSLNLEKLEAMTAICSVGLDMIAIPEDTPAETIAAMIADEAAIGVINMKTTAVRIIPKGREGDMIEFGGLLGTAPVMKVNGASSVDFISRGGQIPAPIHSFKN</sequence>
<reference key="1">
    <citation type="journal article" date="2009" name="J. Bacteriol.">
        <title>Role of conjugative elements in the evolution of the multidrug-resistant pandemic clone Streptococcus pneumoniae Spain23F ST81.</title>
        <authorList>
            <person name="Croucher N.J."/>
            <person name="Walker D."/>
            <person name="Romero P."/>
            <person name="Lennard N."/>
            <person name="Paterson G.K."/>
            <person name="Bason N.C."/>
            <person name="Mitchell A.M."/>
            <person name="Quail M.A."/>
            <person name="Andrew P.W."/>
            <person name="Parkhill J."/>
            <person name="Bentley S.D."/>
            <person name="Mitchell T.J."/>
        </authorList>
    </citation>
    <scope>NUCLEOTIDE SEQUENCE [LARGE SCALE GENOMIC DNA]</scope>
    <source>
        <strain>ATCC 700669 / Spain 23F-1</strain>
    </source>
</reference>
<name>Y227_STRPJ</name>
<comment type="subunit">
    <text evidence="1">Homodimer.</text>
</comment>
<comment type="similarity">
    <text evidence="1">Belongs to the UPF0210 family.</text>
</comment>
<organism>
    <name type="scientific">Streptococcus pneumoniae (strain ATCC 700669 / Spain 23F-1)</name>
    <dbReference type="NCBI Taxonomy" id="561276"/>
    <lineage>
        <taxon>Bacteria</taxon>
        <taxon>Bacillati</taxon>
        <taxon>Bacillota</taxon>
        <taxon>Bacilli</taxon>
        <taxon>Lactobacillales</taxon>
        <taxon>Streptococcaceae</taxon>
        <taxon>Streptococcus</taxon>
    </lineage>
</organism>